<name>FTSL_BUCAP</name>
<comment type="function">
    <text evidence="1">Essential cell division protein.</text>
</comment>
<comment type="subcellular location">
    <subcellularLocation>
        <location evidence="1">Cell membrane</location>
        <topology evidence="1">Single-pass type II membrane protein</topology>
    </subcellularLocation>
    <text evidence="1">Localizes to the division septum where it forms a ring structure.</text>
</comment>
<comment type="similarity">
    <text evidence="3">Belongs to the FtsL family.</text>
</comment>
<keyword id="KW-0131">Cell cycle</keyword>
<keyword id="KW-0132">Cell division</keyword>
<keyword id="KW-1003">Cell membrane</keyword>
<keyword id="KW-0472">Membrane</keyword>
<keyword id="KW-0812">Transmembrane</keyword>
<keyword id="KW-1133">Transmembrane helix</keyword>
<organism>
    <name type="scientific">Buchnera aphidicola subsp. Schizaphis graminum (strain Sg)</name>
    <dbReference type="NCBI Taxonomy" id="198804"/>
    <lineage>
        <taxon>Bacteria</taxon>
        <taxon>Pseudomonadati</taxon>
        <taxon>Pseudomonadota</taxon>
        <taxon>Gammaproteobacteria</taxon>
        <taxon>Enterobacterales</taxon>
        <taxon>Erwiniaceae</taxon>
        <taxon>Buchnera</taxon>
    </lineage>
</organism>
<accession>O85296</accession>
<reference key="1">
    <citation type="journal article" date="1998" name="Curr. Microbiol.">
        <title>Sequence analysis of a DNA fragment from Buchnera aphidicola (Aphid endosymbiont) containing the genes dapD-htrA-ilvI-ilvH-ftsL-ftsI-murE.</title>
        <authorList>
            <person name="Thao M.L."/>
            <person name="Baumann P."/>
        </authorList>
    </citation>
    <scope>NUCLEOTIDE SEQUENCE [GENOMIC DNA]</scope>
</reference>
<reference key="2">
    <citation type="journal article" date="2002" name="Science">
        <title>50 million years of genomic stasis in endosymbiotic bacteria.</title>
        <authorList>
            <person name="Tamas I."/>
            <person name="Klasson L."/>
            <person name="Canbaeck B."/>
            <person name="Naeslund A.K."/>
            <person name="Eriksson A.-S."/>
            <person name="Wernegreen J.J."/>
            <person name="Sandstroem J.P."/>
            <person name="Moran N.A."/>
            <person name="Andersson S.G.E."/>
        </authorList>
    </citation>
    <scope>NUCLEOTIDE SEQUENCE [LARGE SCALE GENOMIC DNA]</scope>
    <source>
        <strain>Sg</strain>
    </source>
</reference>
<dbReference type="EMBL" id="AF060492">
    <property type="protein sequence ID" value="AAC32336.1"/>
    <property type="molecule type" value="Genomic_DNA"/>
</dbReference>
<dbReference type="EMBL" id="AE013218">
    <property type="protein sequence ID" value="AAM67777.1"/>
    <property type="molecule type" value="Genomic_DNA"/>
</dbReference>
<dbReference type="RefSeq" id="WP_011053744.1">
    <property type="nucleotide sequence ID" value="NC_004061.1"/>
</dbReference>
<dbReference type="SMR" id="O85296"/>
<dbReference type="STRING" id="198804.BUsg_217"/>
<dbReference type="GeneID" id="93003683"/>
<dbReference type="KEGG" id="bas:BUsg_217"/>
<dbReference type="eggNOG" id="COG3116">
    <property type="taxonomic scope" value="Bacteria"/>
</dbReference>
<dbReference type="HOGENOM" id="CLU_156524_2_1_6"/>
<dbReference type="Proteomes" id="UP000000416">
    <property type="component" value="Chromosome"/>
</dbReference>
<dbReference type="GO" id="GO:0032153">
    <property type="term" value="C:cell division site"/>
    <property type="evidence" value="ECO:0007669"/>
    <property type="project" value="TreeGrafter"/>
</dbReference>
<dbReference type="GO" id="GO:0005886">
    <property type="term" value="C:plasma membrane"/>
    <property type="evidence" value="ECO:0007669"/>
    <property type="project" value="UniProtKB-SubCell"/>
</dbReference>
<dbReference type="GO" id="GO:0043093">
    <property type="term" value="P:FtsZ-dependent cytokinesis"/>
    <property type="evidence" value="ECO:0007669"/>
    <property type="project" value="TreeGrafter"/>
</dbReference>
<dbReference type="InterPro" id="IPR011922">
    <property type="entry name" value="Cell_div_FtsL"/>
</dbReference>
<dbReference type="NCBIfam" id="TIGR02209">
    <property type="entry name" value="ftsL_broad"/>
    <property type="match status" value="1"/>
</dbReference>
<dbReference type="PANTHER" id="PTHR37479">
    <property type="entry name" value="CELL DIVISION PROTEIN FTSL"/>
    <property type="match status" value="1"/>
</dbReference>
<dbReference type="PANTHER" id="PTHR37479:SF1">
    <property type="entry name" value="CELL DIVISION PROTEIN FTSL"/>
    <property type="match status" value="1"/>
</dbReference>
<dbReference type="Pfam" id="PF04999">
    <property type="entry name" value="FtsL"/>
    <property type="match status" value="1"/>
</dbReference>
<feature type="chain" id="PRO_0000087369" description="Cell division protein FtsL">
    <location>
        <begin position="1"/>
        <end position="81"/>
    </location>
</feature>
<feature type="topological domain" description="Cytoplasmic" evidence="2">
    <location>
        <begin position="1"/>
        <end position="21"/>
    </location>
</feature>
<feature type="transmembrane region" description="Helical" evidence="2">
    <location>
        <begin position="22"/>
        <end position="42"/>
    </location>
</feature>
<feature type="topological domain" description="Extracellular" evidence="2">
    <location>
        <begin position="43"/>
        <end position="81"/>
    </location>
</feature>
<gene>
    <name type="primary">ftsL</name>
    <name type="ordered locus">BUsg_217</name>
</gene>
<sequence>MKIKRYDLPKIIKKDFFIYGKIHLILLLAIILSANSVVIVVYNTRLLIAEEENLNLKTKKKDDEWRNLIIEKNAISMPSIH</sequence>
<protein>
    <recommendedName>
        <fullName>Cell division protein FtsL</fullName>
    </recommendedName>
</protein>
<evidence type="ECO:0000250" key="1"/>
<evidence type="ECO:0000255" key="2"/>
<evidence type="ECO:0000305" key="3"/>
<proteinExistence type="inferred from homology"/>